<reference key="1">
    <citation type="submission" date="2006-12" db="EMBL/GenBank/DDBJ databases">
        <title>Complete sequence of chromosome 1 of Verminephrobacter eiseniae EF01-2.</title>
        <authorList>
            <person name="Copeland A."/>
            <person name="Lucas S."/>
            <person name="Lapidus A."/>
            <person name="Barry K."/>
            <person name="Detter J.C."/>
            <person name="Glavina del Rio T."/>
            <person name="Dalin E."/>
            <person name="Tice H."/>
            <person name="Pitluck S."/>
            <person name="Chertkov O."/>
            <person name="Brettin T."/>
            <person name="Bruce D."/>
            <person name="Han C."/>
            <person name="Tapia R."/>
            <person name="Gilna P."/>
            <person name="Schmutz J."/>
            <person name="Larimer F."/>
            <person name="Land M."/>
            <person name="Hauser L."/>
            <person name="Kyrpides N."/>
            <person name="Kim E."/>
            <person name="Stahl D."/>
            <person name="Richardson P."/>
        </authorList>
    </citation>
    <scope>NUCLEOTIDE SEQUENCE [LARGE SCALE GENOMIC DNA]</scope>
    <source>
        <strain>EF01-2</strain>
    </source>
</reference>
<comment type="function">
    <text evidence="1">This protein binds to 23S rRNA in the presence of protein L20.</text>
</comment>
<comment type="subunit">
    <text evidence="1">Part of the 50S ribosomal subunit. Contacts protein L20.</text>
</comment>
<comment type="similarity">
    <text evidence="1">Belongs to the bacterial ribosomal protein bL21 family.</text>
</comment>
<organism>
    <name type="scientific">Verminephrobacter eiseniae (strain EF01-2)</name>
    <dbReference type="NCBI Taxonomy" id="391735"/>
    <lineage>
        <taxon>Bacteria</taxon>
        <taxon>Pseudomonadati</taxon>
        <taxon>Pseudomonadota</taxon>
        <taxon>Betaproteobacteria</taxon>
        <taxon>Burkholderiales</taxon>
        <taxon>Comamonadaceae</taxon>
        <taxon>Verminephrobacter</taxon>
    </lineage>
</organism>
<gene>
    <name evidence="1" type="primary">rplU</name>
    <name type="ordered locus">Veis_3917</name>
</gene>
<dbReference type="EMBL" id="CP000542">
    <property type="protein sequence ID" value="ABM59624.1"/>
    <property type="molecule type" value="Genomic_DNA"/>
</dbReference>
<dbReference type="RefSeq" id="WP_011811611.1">
    <property type="nucleotide sequence ID" value="NC_008786.1"/>
</dbReference>
<dbReference type="SMR" id="A1WPR7"/>
<dbReference type="STRING" id="391735.Veis_3917"/>
<dbReference type="GeneID" id="76462267"/>
<dbReference type="KEGG" id="vei:Veis_3917"/>
<dbReference type="eggNOG" id="COG0261">
    <property type="taxonomic scope" value="Bacteria"/>
</dbReference>
<dbReference type="HOGENOM" id="CLU_061463_3_2_4"/>
<dbReference type="OrthoDB" id="9813334at2"/>
<dbReference type="Proteomes" id="UP000000374">
    <property type="component" value="Chromosome"/>
</dbReference>
<dbReference type="GO" id="GO:0005737">
    <property type="term" value="C:cytoplasm"/>
    <property type="evidence" value="ECO:0007669"/>
    <property type="project" value="UniProtKB-ARBA"/>
</dbReference>
<dbReference type="GO" id="GO:1990904">
    <property type="term" value="C:ribonucleoprotein complex"/>
    <property type="evidence" value="ECO:0007669"/>
    <property type="project" value="UniProtKB-KW"/>
</dbReference>
<dbReference type="GO" id="GO:0005840">
    <property type="term" value="C:ribosome"/>
    <property type="evidence" value="ECO:0007669"/>
    <property type="project" value="UniProtKB-KW"/>
</dbReference>
<dbReference type="GO" id="GO:0019843">
    <property type="term" value="F:rRNA binding"/>
    <property type="evidence" value="ECO:0007669"/>
    <property type="project" value="UniProtKB-UniRule"/>
</dbReference>
<dbReference type="GO" id="GO:0003735">
    <property type="term" value="F:structural constituent of ribosome"/>
    <property type="evidence" value="ECO:0007669"/>
    <property type="project" value="InterPro"/>
</dbReference>
<dbReference type="GO" id="GO:0006412">
    <property type="term" value="P:translation"/>
    <property type="evidence" value="ECO:0007669"/>
    <property type="project" value="UniProtKB-UniRule"/>
</dbReference>
<dbReference type="HAMAP" id="MF_01363">
    <property type="entry name" value="Ribosomal_bL21"/>
    <property type="match status" value="1"/>
</dbReference>
<dbReference type="InterPro" id="IPR028909">
    <property type="entry name" value="bL21-like"/>
</dbReference>
<dbReference type="InterPro" id="IPR036164">
    <property type="entry name" value="bL21-like_sf"/>
</dbReference>
<dbReference type="InterPro" id="IPR001787">
    <property type="entry name" value="Ribosomal_bL21"/>
</dbReference>
<dbReference type="InterPro" id="IPR018258">
    <property type="entry name" value="Ribosomal_bL21_CS"/>
</dbReference>
<dbReference type="NCBIfam" id="TIGR00061">
    <property type="entry name" value="L21"/>
    <property type="match status" value="1"/>
</dbReference>
<dbReference type="PANTHER" id="PTHR21349">
    <property type="entry name" value="50S RIBOSOMAL PROTEIN L21"/>
    <property type="match status" value="1"/>
</dbReference>
<dbReference type="PANTHER" id="PTHR21349:SF0">
    <property type="entry name" value="LARGE RIBOSOMAL SUBUNIT PROTEIN BL21M"/>
    <property type="match status" value="1"/>
</dbReference>
<dbReference type="Pfam" id="PF00829">
    <property type="entry name" value="Ribosomal_L21p"/>
    <property type="match status" value="1"/>
</dbReference>
<dbReference type="SUPFAM" id="SSF141091">
    <property type="entry name" value="L21p-like"/>
    <property type="match status" value="1"/>
</dbReference>
<dbReference type="PROSITE" id="PS01169">
    <property type="entry name" value="RIBOSOMAL_L21"/>
    <property type="match status" value="1"/>
</dbReference>
<protein>
    <recommendedName>
        <fullName evidence="1">Large ribosomal subunit protein bL21</fullName>
    </recommendedName>
    <alternativeName>
        <fullName evidence="2">50S ribosomal protein L21</fullName>
    </alternativeName>
</protein>
<feature type="chain" id="PRO_1000067913" description="Large ribosomal subunit protein bL21">
    <location>
        <begin position="1"/>
        <end position="103"/>
    </location>
</feature>
<name>RL21_VEREI</name>
<sequence>MYAVIKTGGKQYRVAAGENIKVEQIAADVGQEIVIDQVLAVGNGAELKVGTPLVSGASVKATVVAHGKRDKVHIFKMRRRKHYQKRQGHRQQFTELHIGAIAV</sequence>
<proteinExistence type="inferred from homology"/>
<evidence type="ECO:0000255" key="1">
    <source>
        <dbReference type="HAMAP-Rule" id="MF_01363"/>
    </source>
</evidence>
<evidence type="ECO:0000305" key="2"/>
<keyword id="KW-1185">Reference proteome</keyword>
<keyword id="KW-0687">Ribonucleoprotein</keyword>
<keyword id="KW-0689">Ribosomal protein</keyword>
<keyword id="KW-0694">RNA-binding</keyword>
<keyword id="KW-0699">rRNA-binding</keyword>
<accession>A1WPR7</accession>